<gene>
    <name evidence="1" type="primary">apt</name>
    <name type="ordered locus">SPC_0497</name>
</gene>
<protein>
    <recommendedName>
        <fullName evidence="1">Adenine phosphoribosyltransferase</fullName>
        <shortName evidence="1">APRT</shortName>
        <ecNumber evidence="1">2.4.2.7</ecNumber>
    </recommendedName>
</protein>
<organism>
    <name type="scientific">Salmonella paratyphi C (strain RKS4594)</name>
    <dbReference type="NCBI Taxonomy" id="476213"/>
    <lineage>
        <taxon>Bacteria</taxon>
        <taxon>Pseudomonadati</taxon>
        <taxon>Pseudomonadota</taxon>
        <taxon>Gammaproteobacteria</taxon>
        <taxon>Enterobacterales</taxon>
        <taxon>Enterobacteriaceae</taxon>
        <taxon>Salmonella</taxon>
    </lineage>
</organism>
<accession>C0Q807</accession>
<reference key="1">
    <citation type="journal article" date="2009" name="PLoS ONE">
        <title>Salmonella paratyphi C: genetic divergence from Salmonella choleraesuis and pathogenic convergence with Salmonella typhi.</title>
        <authorList>
            <person name="Liu W.-Q."/>
            <person name="Feng Y."/>
            <person name="Wang Y."/>
            <person name="Zou Q.-H."/>
            <person name="Chen F."/>
            <person name="Guo J.-T."/>
            <person name="Peng Y.-H."/>
            <person name="Jin Y."/>
            <person name="Li Y.-G."/>
            <person name="Hu S.-N."/>
            <person name="Johnston R.N."/>
            <person name="Liu G.-R."/>
            <person name="Liu S.-L."/>
        </authorList>
    </citation>
    <scope>NUCLEOTIDE SEQUENCE [LARGE SCALE GENOMIC DNA]</scope>
    <source>
        <strain>RKS4594</strain>
    </source>
</reference>
<sequence length="183" mass="19985">MTATAQQLEFLKNSIKSIQDYPKPGILFRDVTSLLEDPKAYALSIELLVERYKNAGITKVVGTEARGFLFGAPVALGLGVGFVPVRKPRKLPRETIAETYELEYGTDQLEIHVDAIKPGDNVLVVDDLLATGGTIEATVKLIRRLGGKVTDAAFIINLFDLGGEQRLEKQGITCYSLVPFPGH</sequence>
<name>APT_SALPC</name>
<keyword id="KW-0963">Cytoplasm</keyword>
<keyword id="KW-0328">Glycosyltransferase</keyword>
<keyword id="KW-0660">Purine salvage</keyword>
<keyword id="KW-0808">Transferase</keyword>
<feature type="chain" id="PRO_1000116254" description="Adenine phosphoribosyltransferase">
    <location>
        <begin position="1"/>
        <end position="183"/>
    </location>
</feature>
<evidence type="ECO:0000255" key="1">
    <source>
        <dbReference type="HAMAP-Rule" id="MF_00004"/>
    </source>
</evidence>
<dbReference type="EC" id="2.4.2.7" evidence="1"/>
<dbReference type="EMBL" id="CP000857">
    <property type="protein sequence ID" value="ACN44677.1"/>
    <property type="molecule type" value="Genomic_DNA"/>
</dbReference>
<dbReference type="RefSeq" id="WP_000127350.1">
    <property type="nucleotide sequence ID" value="NC_012125.1"/>
</dbReference>
<dbReference type="SMR" id="C0Q807"/>
<dbReference type="KEGG" id="sei:SPC_0497"/>
<dbReference type="HOGENOM" id="CLU_063339_3_0_6"/>
<dbReference type="UniPathway" id="UPA00588">
    <property type="reaction ID" value="UER00646"/>
</dbReference>
<dbReference type="Proteomes" id="UP000001599">
    <property type="component" value="Chromosome"/>
</dbReference>
<dbReference type="GO" id="GO:0005829">
    <property type="term" value="C:cytosol"/>
    <property type="evidence" value="ECO:0007669"/>
    <property type="project" value="TreeGrafter"/>
</dbReference>
<dbReference type="GO" id="GO:0003999">
    <property type="term" value="F:adenine phosphoribosyltransferase activity"/>
    <property type="evidence" value="ECO:0007669"/>
    <property type="project" value="UniProtKB-UniRule"/>
</dbReference>
<dbReference type="GO" id="GO:0006168">
    <property type="term" value="P:adenine salvage"/>
    <property type="evidence" value="ECO:0007669"/>
    <property type="project" value="InterPro"/>
</dbReference>
<dbReference type="GO" id="GO:0044209">
    <property type="term" value="P:AMP salvage"/>
    <property type="evidence" value="ECO:0007669"/>
    <property type="project" value="UniProtKB-UniRule"/>
</dbReference>
<dbReference type="GO" id="GO:0006166">
    <property type="term" value="P:purine ribonucleoside salvage"/>
    <property type="evidence" value="ECO:0007669"/>
    <property type="project" value="UniProtKB-KW"/>
</dbReference>
<dbReference type="CDD" id="cd06223">
    <property type="entry name" value="PRTases_typeI"/>
    <property type="match status" value="1"/>
</dbReference>
<dbReference type="FunFam" id="3.40.50.2020:FF:000004">
    <property type="entry name" value="Adenine phosphoribosyltransferase"/>
    <property type="match status" value="1"/>
</dbReference>
<dbReference type="Gene3D" id="3.40.50.2020">
    <property type="match status" value="1"/>
</dbReference>
<dbReference type="HAMAP" id="MF_00004">
    <property type="entry name" value="Aden_phosphoribosyltr"/>
    <property type="match status" value="1"/>
</dbReference>
<dbReference type="InterPro" id="IPR005764">
    <property type="entry name" value="Ade_phspho_trans"/>
</dbReference>
<dbReference type="InterPro" id="IPR050120">
    <property type="entry name" value="Adenine_PRTase"/>
</dbReference>
<dbReference type="InterPro" id="IPR000836">
    <property type="entry name" value="PRibTrfase_dom"/>
</dbReference>
<dbReference type="InterPro" id="IPR029057">
    <property type="entry name" value="PRTase-like"/>
</dbReference>
<dbReference type="NCBIfam" id="TIGR01090">
    <property type="entry name" value="apt"/>
    <property type="match status" value="1"/>
</dbReference>
<dbReference type="NCBIfam" id="NF002632">
    <property type="entry name" value="PRK02304.1-1"/>
    <property type="match status" value="1"/>
</dbReference>
<dbReference type="NCBIfam" id="NF002634">
    <property type="entry name" value="PRK02304.1-3"/>
    <property type="match status" value="1"/>
</dbReference>
<dbReference type="NCBIfam" id="NF002636">
    <property type="entry name" value="PRK02304.1-5"/>
    <property type="match status" value="1"/>
</dbReference>
<dbReference type="PANTHER" id="PTHR11776">
    <property type="entry name" value="ADENINE PHOSPHORIBOSYLTRANSFERASE"/>
    <property type="match status" value="1"/>
</dbReference>
<dbReference type="PANTHER" id="PTHR11776:SF7">
    <property type="entry name" value="PHOSPHORIBOSYLTRANSFERASE DOMAIN-CONTAINING PROTEIN"/>
    <property type="match status" value="1"/>
</dbReference>
<dbReference type="Pfam" id="PF00156">
    <property type="entry name" value="Pribosyltran"/>
    <property type="match status" value="1"/>
</dbReference>
<dbReference type="SUPFAM" id="SSF53271">
    <property type="entry name" value="PRTase-like"/>
    <property type="match status" value="1"/>
</dbReference>
<dbReference type="PROSITE" id="PS00103">
    <property type="entry name" value="PUR_PYR_PR_TRANSFER"/>
    <property type="match status" value="1"/>
</dbReference>
<proteinExistence type="inferred from homology"/>
<comment type="function">
    <text evidence="1">Catalyzes a salvage reaction resulting in the formation of AMP, that is energically less costly than de novo synthesis.</text>
</comment>
<comment type="catalytic activity">
    <reaction evidence="1">
        <text>AMP + diphosphate = 5-phospho-alpha-D-ribose 1-diphosphate + adenine</text>
        <dbReference type="Rhea" id="RHEA:16609"/>
        <dbReference type="ChEBI" id="CHEBI:16708"/>
        <dbReference type="ChEBI" id="CHEBI:33019"/>
        <dbReference type="ChEBI" id="CHEBI:58017"/>
        <dbReference type="ChEBI" id="CHEBI:456215"/>
        <dbReference type="EC" id="2.4.2.7"/>
    </reaction>
</comment>
<comment type="pathway">
    <text evidence="1">Purine metabolism; AMP biosynthesis via salvage pathway; AMP from adenine: step 1/1.</text>
</comment>
<comment type="subunit">
    <text evidence="1">Homodimer.</text>
</comment>
<comment type="subcellular location">
    <subcellularLocation>
        <location evidence="1">Cytoplasm</location>
    </subcellularLocation>
</comment>
<comment type="similarity">
    <text evidence="1">Belongs to the purine/pyrimidine phosphoribosyltransferase family.</text>
</comment>